<keyword id="KW-0028">Amino-acid biosynthesis</keyword>
<keyword id="KW-0061">Asparagine biosynthesis</keyword>
<keyword id="KW-0067">ATP-binding</keyword>
<keyword id="KW-0963">Cytoplasm</keyword>
<keyword id="KW-0436">Ligase</keyword>
<keyword id="KW-0547">Nucleotide-binding</keyword>
<gene>
    <name evidence="1" type="primary">asnA</name>
    <name type="ordered locus">SEN3691</name>
</gene>
<feature type="chain" id="PRO_1000129125" description="Aspartate--ammonia ligase">
    <location>
        <begin position="1"/>
        <end position="330"/>
    </location>
</feature>
<name>ASNA_SALEP</name>
<dbReference type="EC" id="6.3.1.1" evidence="1"/>
<dbReference type="EMBL" id="AM933172">
    <property type="protein sequence ID" value="CAR35267.1"/>
    <property type="molecule type" value="Genomic_DNA"/>
</dbReference>
<dbReference type="RefSeq" id="WP_000845123.1">
    <property type="nucleotide sequence ID" value="NC_011294.1"/>
</dbReference>
<dbReference type="SMR" id="B5QVE4"/>
<dbReference type="KEGG" id="set:SEN3691"/>
<dbReference type="HOGENOM" id="CLU_071543_0_0_6"/>
<dbReference type="UniPathway" id="UPA00134">
    <property type="reaction ID" value="UER00194"/>
</dbReference>
<dbReference type="Proteomes" id="UP000000613">
    <property type="component" value="Chromosome"/>
</dbReference>
<dbReference type="GO" id="GO:0005829">
    <property type="term" value="C:cytosol"/>
    <property type="evidence" value="ECO:0007669"/>
    <property type="project" value="TreeGrafter"/>
</dbReference>
<dbReference type="GO" id="GO:0004071">
    <property type="term" value="F:aspartate-ammonia ligase activity"/>
    <property type="evidence" value="ECO:0007669"/>
    <property type="project" value="UniProtKB-UniRule"/>
</dbReference>
<dbReference type="GO" id="GO:0005524">
    <property type="term" value="F:ATP binding"/>
    <property type="evidence" value="ECO:0007669"/>
    <property type="project" value="UniProtKB-UniRule"/>
</dbReference>
<dbReference type="GO" id="GO:0070981">
    <property type="term" value="P:L-asparagine biosynthetic process"/>
    <property type="evidence" value="ECO:0007669"/>
    <property type="project" value="UniProtKB-UniRule"/>
</dbReference>
<dbReference type="CDD" id="cd00645">
    <property type="entry name" value="AsnA"/>
    <property type="match status" value="1"/>
</dbReference>
<dbReference type="FunFam" id="3.30.930.10:FF:000025">
    <property type="entry name" value="Aspartate--ammonia ligase"/>
    <property type="match status" value="1"/>
</dbReference>
<dbReference type="Gene3D" id="3.30.930.10">
    <property type="entry name" value="Bira Bifunctional Protein, Domain 2"/>
    <property type="match status" value="1"/>
</dbReference>
<dbReference type="HAMAP" id="MF_00555">
    <property type="entry name" value="AsnA"/>
    <property type="match status" value="1"/>
</dbReference>
<dbReference type="InterPro" id="IPR006195">
    <property type="entry name" value="aa-tRNA-synth_II"/>
</dbReference>
<dbReference type="InterPro" id="IPR045864">
    <property type="entry name" value="aa-tRNA-synth_II/BPL/LPL"/>
</dbReference>
<dbReference type="InterPro" id="IPR004618">
    <property type="entry name" value="AsnA"/>
</dbReference>
<dbReference type="NCBIfam" id="TIGR00669">
    <property type="entry name" value="asnA"/>
    <property type="match status" value="1"/>
</dbReference>
<dbReference type="PANTHER" id="PTHR30073">
    <property type="entry name" value="ASPARTATE--AMMONIA LIGASE"/>
    <property type="match status" value="1"/>
</dbReference>
<dbReference type="PANTHER" id="PTHR30073:SF5">
    <property type="entry name" value="ASPARTATE--AMMONIA LIGASE"/>
    <property type="match status" value="1"/>
</dbReference>
<dbReference type="Pfam" id="PF03590">
    <property type="entry name" value="AsnA"/>
    <property type="match status" value="1"/>
</dbReference>
<dbReference type="PIRSF" id="PIRSF001555">
    <property type="entry name" value="Asp_ammon_ligase"/>
    <property type="match status" value="1"/>
</dbReference>
<dbReference type="SUPFAM" id="SSF55681">
    <property type="entry name" value="Class II aaRS and biotin synthetases"/>
    <property type="match status" value="1"/>
</dbReference>
<dbReference type="PROSITE" id="PS50862">
    <property type="entry name" value="AA_TRNA_LIGASE_II"/>
    <property type="match status" value="1"/>
</dbReference>
<proteinExistence type="inferred from homology"/>
<reference key="1">
    <citation type="journal article" date="2008" name="Genome Res.">
        <title>Comparative genome analysis of Salmonella enteritidis PT4 and Salmonella gallinarum 287/91 provides insights into evolutionary and host adaptation pathways.</title>
        <authorList>
            <person name="Thomson N.R."/>
            <person name="Clayton D.J."/>
            <person name="Windhorst D."/>
            <person name="Vernikos G."/>
            <person name="Davidson S."/>
            <person name="Churcher C."/>
            <person name="Quail M.A."/>
            <person name="Stevens M."/>
            <person name="Jones M.A."/>
            <person name="Watson M."/>
            <person name="Barron A."/>
            <person name="Layton A."/>
            <person name="Pickard D."/>
            <person name="Kingsley R.A."/>
            <person name="Bignell A."/>
            <person name="Clark L."/>
            <person name="Harris B."/>
            <person name="Ormond D."/>
            <person name="Abdellah Z."/>
            <person name="Brooks K."/>
            <person name="Cherevach I."/>
            <person name="Chillingworth T."/>
            <person name="Woodward J."/>
            <person name="Norberczak H."/>
            <person name="Lord A."/>
            <person name="Arrowsmith C."/>
            <person name="Jagels K."/>
            <person name="Moule S."/>
            <person name="Mungall K."/>
            <person name="Saunders M."/>
            <person name="Whitehead S."/>
            <person name="Chabalgoity J.A."/>
            <person name="Maskell D."/>
            <person name="Humphreys T."/>
            <person name="Roberts M."/>
            <person name="Barrow P.A."/>
            <person name="Dougan G."/>
            <person name="Parkhill J."/>
        </authorList>
    </citation>
    <scope>NUCLEOTIDE SEQUENCE [LARGE SCALE GENOMIC DNA]</scope>
    <source>
        <strain>P125109</strain>
    </source>
</reference>
<sequence>MKTAYIAKQRQISFVKSHFSRQLEERLGLIEVQAPILSRVGDGTQDNLSGCEKAVQVKVKALPDAQFEVVHSLAKWKRQTLGQHDFSAGEGLYTHMKALRPDEDRLSPLHSVYVDQWDWERVMGDGERQFSTLKSTVEAIWAGIKATEAEVHKQFGLAPFLPEQIQFVHSQELLSRYPDLDAKGRERAIAKELGAVFLVGIGGKLSDGHRHDVRAPDYDDWSSASELGYAGLNGDILVWNPVLEDAFELSSMGIRVDADTLMRQLALTGDEDRLQLEWHQALLRGEMPQTIGGGIGQSRLTMLLLQLPHIGQVQCGVWPAQVRESIPAIL</sequence>
<accession>B5QVE4</accession>
<evidence type="ECO:0000255" key="1">
    <source>
        <dbReference type="HAMAP-Rule" id="MF_00555"/>
    </source>
</evidence>
<comment type="catalytic activity">
    <reaction evidence="1">
        <text>L-aspartate + NH4(+) + ATP = L-asparagine + AMP + diphosphate + H(+)</text>
        <dbReference type="Rhea" id="RHEA:11372"/>
        <dbReference type="ChEBI" id="CHEBI:15378"/>
        <dbReference type="ChEBI" id="CHEBI:28938"/>
        <dbReference type="ChEBI" id="CHEBI:29991"/>
        <dbReference type="ChEBI" id="CHEBI:30616"/>
        <dbReference type="ChEBI" id="CHEBI:33019"/>
        <dbReference type="ChEBI" id="CHEBI:58048"/>
        <dbReference type="ChEBI" id="CHEBI:456215"/>
        <dbReference type="EC" id="6.3.1.1"/>
    </reaction>
</comment>
<comment type="pathway">
    <text evidence="1">Amino-acid biosynthesis; L-asparagine biosynthesis; L-asparagine from L-aspartate (ammonia route): step 1/1.</text>
</comment>
<comment type="subcellular location">
    <subcellularLocation>
        <location evidence="1">Cytoplasm</location>
    </subcellularLocation>
</comment>
<comment type="similarity">
    <text evidence="1">Belongs to the class-II aminoacyl-tRNA synthetase family. AsnA subfamily.</text>
</comment>
<protein>
    <recommendedName>
        <fullName evidence="1">Aspartate--ammonia ligase</fullName>
        <ecNumber evidence="1">6.3.1.1</ecNumber>
    </recommendedName>
    <alternativeName>
        <fullName evidence="1">Asparagine synthetase A</fullName>
    </alternativeName>
</protein>
<organism>
    <name type="scientific">Salmonella enteritidis PT4 (strain P125109)</name>
    <dbReference type="NCBI Taxonomy" id="550537"/>
    <lineage>
        <taxon>Bacteria</taxon>
        <taxon>Pseudomonadati</taxon>
        <taxon>Pseudomonadota</taxon>
        <taxon>Gammaproteobacteria</taxon>
        <taxon>Enterobacterales</taxon>
        <taxon>Enterobacteriaceae</taxon>
        <taxon>Salmonella</taxon>
    </lineage>
</organism>